<proteinExistence type="inferred from homology"/>
<reference key="1">
    <citation type="journal article" date="2007" name="J. Bacteriol.">
        <title>The genome sequence of avian pathogenic Escherichia coli strain O1:K1:H7 shares strong similarities with human extraintestinal pathogenic E. coli genomes.</title>
        <authorList>
            <person name="Johnson T.J."/>
            <person name="Kariyawasam S."/>
            <person name="Wannemuehler Y."/>
            <person name="Mangiamele P."/>
            <person name="Johnson S.J."/>
            <person name="Doetkott C."/>
            <person name="Skyberg J.A."/>
            <person name="Lynne A.M."/>
            <person name="Johnson J.R."/>
            <person name="Nolan L.K."/>
        </authorList>
    </citation>
    <scope>NUCLEOTIDE SEQUENCE [LARGE SCALE GENOMIC DNA]</scope>
</reference>
<feature type="initiator methionine" description="Removed" evidence="1">
    <location>
        <position position="1"/>
    </location>
</feature>
<feature type="chain" id="PRO_1000008694" description="Formamidopyrimidine-DNA glycosylase">
    <location>
        <begin position="2"/>
        <end position="269"/>
    </location>
</feature>
<feature type="zinc finger region" description="FPG-type" evidence="2">
    <location>
        <begin position="235"/>
        <end position="269"/>
    </location>
</feature>
<feature type="active site" description="Schiff-base intermediate with DNA" evidence="2">
    <location>
        <position position="2"/>
    </location>
</feature>
<feature type="active site" description="Proton donor" evidence="2">
    <location>
        <position position="3"/>
    </location>
</feature>
<feature type="active site" description="Proton donor; for beta-elimination activity" evidence="2">
    <location>
        <position position="57"/>
    </location>
</feature>
<feature type="active site" description="Proton donor; for delta-elimination activity" evidence="2">
    <location>
        <position position="259"/>
    </location>
</feature>
<feature type="binding site" evidence="2">
    <location>
        <position position="90"/>
    </location>
    <ligand>
        <name>DNA</name>
        <dbReference type="ChEBI" id="CHEBI:16991"/>
    </ligand>
</feature>
<feature type="binding site" evidence="2">
    <location>
        <position position="109"/>
    </location>
    <ligand>
        <name>DNA</name>
        <dbReference type="ChEBI" id="CHEBI:16991"/>
    </ligand>
</feature>
<feature type="binding site" evidence="2">
    <location>
        <position position="150"/>
    </location>
    <ligand>
        <name>DNA</name>
        <dbReference type="ChEBI" id="CHEBI:16991"/>
    </ligand>
</feature>
<comment type="function">
    <text evidence="2">Involved in base excision repair of DNA damaged by oxidation or by mutagenic agents. Acts as a DNA glycosylase that recognizes and removes damaged bases. Has a preference for oxidized purines, such as 7,8-dihydro-8-oxoguanine (8-oxoG). Has AP (apurinic/apyrimidinic) lyase activity and introduces nicks in the DNA strand. Cleaves the DNA backbone by beta-delta elimination to generate a single-strand break at the site of the removed base with both 3'- and 5'-phosphates.</text>
</comment>
<comment type="catalytic activity">
    <reaction evidence="2">
        <text>Hydrolysis of DNA containing ring-opened 7-methylguanine residues, releasing 2,6-diamino-4-hydroxy-5-(N-methyl)formamidopyrimidine.</text>
        <dbReference type="EC" id="3.2.2.23"/>
    </reaction>
</comment>
<comment type="catalytic activity">
    <reaction evidence="2">
        <text>2'-deoxyribonucleotide-(2'-deoxyribose 5'-phosphate)-2'-deoxyribonucleotide-DNA = a 3'-end 2'-deoxyribonucleotide-(2,3-dehydro-2,3-deoxyribose 5'-phosphate)-DNA + a 5'-end 5'-phospho-2'-deoxyribonucleoside-DNA + H(+)</text>
        <dbReference type="Rhea" id="RHEA:66592"/>
        <dbReference type="Rhea" id="RHEA-COMP:13180"/>
        <dbReference type="Rhea" id="RHEA-COMP:16897"/>
        <dbReference type="Rhea" id="RHEA-COMP:17067"/>
        <dbReference type="ChEBI" id="CHEBI:15378"/>
        <dbReference type="ChEBI" id="CHEBI:136412"/>
        <dbReference type="ChEBI" id="CHEBI:157695"/>
        <dbReference type="ChEBI" id="CHEBI:167181"/>
        <dbReference type="EC" id="4.2.99.18"/>
    </reaction>
</comment>
<comment type="cofactor">
    <cofactor evidence="2">
        <name>Zn(2+)</name>
        <dbReference type="ChEBI" id="CHEBI:29105"/>
    </cofactor>
    <text evidence="2">Binds 1 zinc ion per subunit.</text>
</comment>
<comment type="subunit">
    <text evidence="2">Monomer.</text>
</comment>
<comment type="similarity">
    <text evidence="2">Belongs to the FPG family.</text>
</comment>
<keyword id="KW-0227">DNA damage</keyword>
<keyword id="KW-0234">DNA repair</keyword>
<keyword id="KW-0238">DNA-binding</keyword>
<keyword id="KW-0326">Glycosidase</keyword>
<keyword id="KW-0378">Hydrolase</keyword>
<keyword id="KW-0456">Lyase</keyword>
<keyword id="KW-0479">Metal-binding</keyword>
<keyword id="KW-0511">Multifunctional enzyme</keyword>
<keyword id="KW-1185">Reference proteome</keyword>
<keyword id="KW-0862">Zinc</keyword>
<keyword id="KW-0863">Zinc-finger</keyword>
<accession>A1AHG8</accession>
<dbReference type="EC" id="3.2.2.23" evidence="2"/>
<dbReference type="EC" id="4.2.99.18" evidence="2"/>
<dbReference type="EMBL" id="CP000468">
    <property type="protein sequence ID" value="ABJ03108.1"/>
    <property type="molecule type" value="Genomic_DNA"/>
</dbReference>
<dbReference type="RefSeq" id="WP_001114533.1">
    <property type="nucleotide sequence ID" value="NZ_CADILS010000011.1"/>
</dbReference>
<dbReference type="SMR" id="A1AHG8"/>
<dbReference type="GeneID" id="93778348"/>
<dbReference type="KEGG" id="ecv:APECO1_2824"/>
<dbReference type="HOGENOM" id="CLU_038423_1_1_6"/>
<dbReference type="Proteomes" id="UP000008216">
    <property type="component" value="Chromosome"/>
</dbReference>
<dbReference type="GO" id="GO:0034039">
    <property type="term" value="F:8-oxo-7,8-dihydroguanine DNA N-glycosylase activity"/>
    <property type="evidence" value="ECO:0007669"/>
    <property type="project" value="TreeGrafter"/>
</dbReference>
<dbReference type="GO" id="GO:0140078">
    <property type="term" value="F:class I DNA-(apurinic or apyrimidinic site) endonuclease activity"/>
    <property type="evidence" value="ECO:0007669"/>
    <property type="project" value="UniProtKB-EC"/>
</dbReference>
<dbReference type="GO" id="GO:0003684">
    <property type="term" value="F:damaged DNA binding"/>
    <property type="evidence" value="ECO:0007669"/>
    <property type="project" value="InterPro"/>
</dbReference>
<dbReference type="GO" id="GO:0008270">
    <property type="term" value="F:zinc ion binding"/>
    <property type="evidence" value="ECO:0007669"/>
    <property type="project" value="UniProtKB-UniRule"/>
</dbReference>
<dbReference type="GO" id="GO:0006284">
    <property type="term" value="P:base-excision repair"/>
    <property type="evidence" value="ECO:0007669"/>
    <property type="project" value="InterPro"/>
</dbReference>
<dbReference type="CDD" id="cd08966">
    <property type="entry name" value="EcFpg-like_N"/>
    <property type="match status" value="1"/>
</dbReference>
<dbReference type="FunFam" id="1.10.8.50:FF:000003">
    <property type="entry name" value="Formamidopyrimidine-DNA glycosylase"/>
    <property type="match status" value="1"/>
</dbReference>
<dbReference type="FunFam" id="3.20.190.10:FF:000001">
    <property type="entry name" value="Formamidopyrimidine-DNA glycosylase"/>
    <property type="match status" value="1"/>
</dbReference>
<dbReference type="Gene3D" id="1.10.8.50">
    <property type="match status" value="1"/>
</dbReference>
<dbReference type="Gene3D" id="3.20.190.10">
    <property type="entry name" value="MutM-like, N-terminal"/>
    <property type="match status" value="1"/>
</dbReference>
<dbReference type="HAMAP" id="MF_00103">
    <property type="entry name" value="Fapy_DNA_glycosyl"/>
    <property type="match status" value="1"/>
</dbReference>
<dbReference type="InterPro" id="IPR015886">
    <property type="entry name" value="DNA_glyclase/AP_lyase_DNA-bd"/>
</dbReference>
<dbReference type="InterPro" id="IPR015887">
    <property type="entry name" value="DNA_glyclase_Znf_dom_DNA_BS"/>
</dbReference>
<dbReference type="InterPro" id="IPR020629">
    <property type="entry name" value="Formamido-pyr_DNA_Glyclase"/>
</dbReference>
<dbReference type="InterPro" id="IPR012319">
    <property type="entry name" value="FPG_cat"/>
</dbReference>
<dbReference type="InterPro" id="IPR035937">
    <property type="entry name" value="MutM-like_N-ter"/>
</dbReference>
<dbReference type="InterPro" id="IPR010979">
    <property type="entry name" value="Ribosomal_uS13-like_H2TH"/>
</dbReference>
<dbReference type="InterPro" id="IPR000214">
    <property type="entry name" value="Znf_DNA_glyclase/AP_lyase"/>
</dbReference>
<dbReference type="InterPro" id="IPR010663">
    <property type="entry name" value="Znf_FPG/IleRS"/>
</dbReference>
<dbReference type="NCBIfam" id="TIGR00577">
    <property type="entry name" value="fpg"/>
    <property type="match status" value="1"/>
</dbReference>
<dbReference type="NCBIfam" id="NF002211">
    <property type="entry name" value="PRK01103.1"/>
    <property type="match status" value="1"/>
</dbReference>
<dbReference type="PANTHER" id="PTHR22993">
    <property type="entry name" value="FORMAMIDOPYRIMIDINE-DNA GLYCOSYLASE"/>
    <property type="match status" value="1"/>
</dbReference>
<dbReference type="PANTHER" id="PTHR22993:SF9">
    <property type="entry name" value="FORMAMIDOPYRIMIDINE-DNA GLYCOSYLASE"/>
    <property type="match status" value="1"/>
</dbReference>
<dbReference type="Pfam" id="PF01149">
    <property type="entry name" value="Fapy_DNA_glyco"/>
    <property type="match status" value="1"/>
</dbReference>
<dbReference type="Pfam" id="PF06831">
    <property type="entry name" value="H2TH"/>
    <property type="match status" value="1"/>
</dbReference>
<dbReference type="Pfam" id="PF06827">
    <property type="entry name" value="zf-FPG_IleRS"/>
    <property type="match status" value="1"/>
</dbReference>
<dbReference type="SMART" id="SM00898">
    <property type="entry name" value="Fapy_DNA_glyco"/>
    <property type="match status" value="1"/>
</dbReference>
<dbReference type="SMART" id="SM01232">
    <property type="entry name" value="H2TH"/>
    <property type="match status" value="1"/>
</dbReference>
<dbReference type="SUPFAM" id="SSF57716">
    <property type="entry name" value="Glucocorticoid receptor-like (DNA-binding domain)"/>
    <property type="match status" value="1"/>
</dbReference>
<dbReference type="SUPFAM" id="SSF81624">
    <property type="entry name" value="N-terminal domain of MutM-like DNA repair proteins"/>
    <property type="match status" value="1"/>
</dbReference>
<dbReference type="SUPFAM" id="SSF46946">
    <property type="entry name" value="S13-like H2TH domain"/>
    <property type="match status" value="1"/>
</dbReference>
<dbReference type="PROSITE" id="PS51068">
    <property type="entry name" value="FPG_CAT"/>
    <property type="match status" value="1"/>
</dbReference>
<dbReference type="PROSITE" id="PS01242">
    <property type="entry name" value="ZF_FPG_1"/>
    <property type="match status" value="1"/>
</dbReference>
<dbReference type="PROSITE" id="PS51066">
    <property type="entry name" value="ZF_FPG_2"/>
    <property type="match status" value="1"/>
</dbReference>
<sequence>MPELPEVETSRRGIEPHLVGATILHAVVRNGRLRWPVSEEIYRLSDQPVLSVQRRAKYLLLELPEGWIIIHLGMSGSLRILPEELPPEKHDHVDLVMSNGKVLRYTDPRRFGAWLWTKELEGHNVLAHLGPEPLSDDFNGEYLHQKCAKKKTAIKPWLMDNKLVVGVGNIYASESLFAAGIHPDRLASSLSLAECELLARVIKAVLLRSIEQGGTTLKDFLQSDGKPGYFAQELQVYGRKGEPCRVCGTPIVATKHAQRATFYCRQCQK</sequence>
<evidence type="ECO:0000250" key="1"/>
<evidence type="ECO:0000255" key="2">
    <source>
        <dbReference type="HAMAP-Rule" id="MF_00103"/>
    </source>
</evidence>
<gene>
    <name evidence="2" type="primary">mutM</name>
    <name evidence="2" type="synonym">fpg</name>
    <name type="ordered locus">Ecok1_36140</name>
    <name type="ORF">APECO1_2824</name>
</gene>
<protein>
    <recommendedName>
        <fullName evidence="2">Formamidopyrimidine-DNA glycosylase</fullName>
        <shortName evidence="2">Fapy-DNA glycosylase</shortName>
        <ecNumber evidence="2">3.2.2.23</ecNumber>
    </recommendedName>
    <alternativeName>
        <fullName evidence="2">DNA-(apurinic or apyrimidinic site) lyase MutM</fullName>
        <shortName evidence="2">AP lyase MutM</shortName>
        <ecNumber evidence="2">4.2.99.18</ecNumber>
    </alternativeName>
</protein>
<organism>
    <name type="scientific">Escherichia coli O1:K1 / APEC</name>
    <dbReference type="NCBI Taxonomy" id="405955"/>
    <lineage>
        <taxon>Bacteria</taxon>
        <taxon>Pseudomonadati</taxon>
        <taxon>Pseudomonadota</taxon>
        <taxon>Gammaproteobacteria</taxon>
        <taxon>Enterobacterales</taxon>
        <taxon>Enterobacteriaceae</taxon>
        <taxon>Escherichia</taxon>
    </lineage>
</organism>
<name>FPG_ECOK1</name>